<dbReference type="EC" id="2.2.1.7" evidence="1"/>
<dbReference type="EMBL" id="CP000103">
    <property type="protein sequence ID" value="ABB73544.1"/>
    <property type="molecule type" value="Genomic_DNA"/>
</dbReference>
<dbReference type="RefSeq" id="WP_011379598.1">
    <property type="nucleotide sequence ID" value="NC_007614.1"/>
</dbReference>
<dbReference type="SMR" id="Q2YCH7"/>
<dbReference type="STRING" id="323848.Nmul_A0236"/>
<dbReference type="KEGG" id="nmu:Nmul_A0236"/>
<dbReference type="eggNOG" id="COG1154">
    <property type="taxonomic scope" value="Bacteria"/>
</dbReference>
<dbReference type="HOGENOM" id="CLU_009227_1_4_4"/>
<dbReference type="OrthoDB" id="9803371at2"/>
<dbReference type="UniPathway" id="UPA00064">
    <property type="reaction ID" value="UER00091"/>
</dbReference>
<dbReference type="Proteomes" id="UP000002718">
    <property type="component" value="Chromosome"/>
</dbReference>
<dbReference type="GO" id="GO:0005829">
    <property type="term" value="C:cytosol"/>
    <property type="evidence" value="ECO:0007669"/>
    <property type="project" value="TreeGrafter"/>
</dbReference>
<dbReference type="GO" id="GO:0008661">
    <property type="term" value="F:1-deoxy-D-xylulose-5-phosphate synthase activity"/>
    <property type="evidence" value="ECO:0007669"/>
    <property type="project" value="UniProtKB-UniRule"/>
</dbReference>
<dbReference type="GO" id="GO:0000287">
    <property type="term" value="F:magnesium ion binding"/>
    <property type="evidence" value="ECO:0007669"/>
    <property type="project" value="UniProtKB-UniRule"/>
</dbReference>
<dbReference type="GO" id="GO:0030976">
    <property type="term" value="F:thiamine pyrophosphate binding"/>
    <property type="evidence" value="ECO:0007669"/>
    <property type="project" value="UniProtKB-UniRule"/>
</dbReference>
<dbReference type="GO" id="GO:0052865">
    <property type="term" value="P:1-deoxy-D-xylulose 5-phosphate biosynthetic process"/>
    <property type="evidence" value="ECO:0007669"/>
    <property type="project" value="UniProtKB-UniPathway"/>
</dbReference>
<dbReference type="GO" id="GO:0019288">
    <property type="term" value="P:isopentenyl diphosphate biosynthetic process, methylerythritol 4-phosphate pathway"/>
    <property type="evidence" value="ECO:0007669"/>
    <property type="project" value="TreeGrafter"/>
</dbReference>
<dbReference type="GO" id="GO:0016114">
    <property type="term" value="P:terpenoid biosynthetic process"/>
    <property type="evidence" value="ECO:0007669"/>
    <property type="project" value="UniProtKB-UniRule"/>
</dbReference>
<dbReference type="GO" id="GO:0009228">
    <property type="term" value="P:thiamine biosynthetic process"/>
    <property type="evidence" value="ECO:0007669"/>
    <property type="project" value="UniProtKB-UniRule"/>
</dbReference>
<dbReference type="CDD" id="cd02007">
    <property type="entry name" value="TPP_DXS"/>
    <property type="match status" value="1"/>
</dbReference>
<dbReference type="CDD" id="cd07033">
    <property type="entry name" value="TPP_PYR_DXS_TK_like"/>
    <property type="match status" value="1"/>
</dbReference>
<dbReference type="FunFam" id="3.40.50.920:FF:000002">
    <property type="entry name" value="1-deoxy-D-xylulose-5-phosphate synthase"/>
    <property type="match status" value="1"/>
</dbReference>
<dbReference type="FunFam" id="3.40.50.970:FF:000005">
    <property type="entry name" value="1-deoxy-D-xylulose-5-phosphate synthase"/>
    <property type="match status" value="1"/>
</dbReference>
<dbReference type="Gene3D" id="3.40.50.920">
    <property type="match status" value="1"/>
</dbReference>
<dbReference type="Gene3D" id="3.40.50.970">
    <property type="match status" value="2"/>
</dbReference>
<dbReference type="HAMAP" id="MF_00315">
    <property type="entry name" value="DXP_synth"/>
    <property type="match status" value="1"/>
</dbReference>
<dbReference type="InterPro" id="IPR005477">
    <property type="entry name" value="Dxylulose-5-P_synthase"/>
</dbReference>
<dbReference type="InterPro" id="IPR029061">
    <property type="entry name" value="THDP-binding"/>
</dbReference>
<dbReference type="InterPro" id="IPR009014">
    <property type="entry name" value="Transketo_C/PFOR_II"/>
</dbReference>
<dbReference type="InterPro" id="IPR005475">
    <property type="entry name" value="Transketolase-like_Pyr-bd"/>
</dbReference>
<dbReference type="InterPro" id="IPR020826">
    <property type="entry name" value="Transketolase_BS"/>
</dbReference>
<dbReference type="InterPro" id="IPR033248">
    <property type="entry name" value="Transketolase_C"/>
</dbReference>
<dbReference type="InterPro" id="IPR049557">
    <property type="entry name" value="Transketolase_CS"/>
</dbReference>
<dbReference type="NCBIfam" id="TIGR00204">
    <property type="entry name" value="dxs"/>
    <property type="match status" value="1"/>
</dbReference>
<dbReference type="NCBIfam" id="NF003933">
    <property type="entry name" value="PRK05444.2-2"/>
    <property type="match status" value="1"/>
</dbReference>
<dbReference type="PANTHER" id="PTHR43322">
    <property type="entry name" value="1-D-DEOXYXYLULOSE 5-PHOSPHATE SYNTHASE-RELATED"/>
    <property type="match status" value="1"/>
</dbReference>
<dbReference type="PANTHER" id="PTHR43322:SF5">
    <property type="entry name" value="1-DEOXY-D-XYLULOSE-5-PHOSPHATE SYNTHASE, CHLOROPLASTIC"/>
    <property type="match status" value="1"/>
</dbReference>
<dbReference type="Pfam" id="PF13292">
    <property type="entry name" value="DXP_synthase_N"/>
    <property type="match status" value="1"/>
</dbReference>
<dbReference type="Pfam" id="PF02779">
    <property type="entry name" value="Transket_pyr"/>
    <property type="match status" value="1"/>
</dbReference>
<dbReference type="Pfam" id="PF02780">
    <property type="entry name" value="Transketolase_C"/>
    <property type="match status" value="1"/>
</dbReference>
<dbReference type="SMART" id="SM00861">
    <property type="entry name" value="Transket_pyr"/>
    <property type="match status" value="1"/>
</dbReference>
<dbReference type="SUPFAM" id="SSF52518">
    <property type="entry name" value="Thiamin diphosphate-binding fold (THDP-binding)"/>
    <property type="match status" value="2"/>
</dbReference>
<dbReference type="SUPFAM" id="SSF52922">
    <property type="entry name" value="TK C-terminal domain-like"/>
    <property type="match status" value="1"/>
</dbReference>
<dbReference type="PROSITE" id="PS00801">
    <property type="entry name" value="TRANSKETOLASE_1"/>
    <property type="match status" value="1"/>
</dbReference>
<dbReference type="PROSITE" id="PS00802">
    <property type="entry name" value="TRANSKETOLASE_2"/>
    <property type="match status" value="1"/>
</dbReference>
<protein>
    <recommendedName>
        <fullName evidence="1">1-deoxy-D-xylulose-5-phosphate synthase</fullName>
        <ecNumber evidence="1">2.2.1.7</ecNumber>
    </recommendedName>
    <alternativeName>
        <fullName evidence="1">1-deoxyxylulose-5-phosphate synthase</fullName>
        <shortName evidence="1">DXP synthase</shortName>
        <shortName evidence="1">DXPS</shortName>
    </alternativeName>
</protein>
<proteinExistence type="inferred from homology"/>
<keyword id="KW-0414">Isoprene biosynthesis</keyword>
<keyword id="KW-0460">Magnesium</keyword>
<keyword id="KW-0479">Metal-binding</keyword>
<keyword id="KW-1185">Reference proteome</keyword>
<keyword id="KW-0784">Thiamine biosynthesis</keyword>
<keyword id="KW-0786">Thiamine pyrophosphate</keyword>
<keyword id="KW-0808">Transferase</keyword>
<sequence>MHPLLNTITDPVKLRALDRKLLPQLADELRQFLVESVAKTGGHLSSNLGTVELTIALHYVFNTPYDRLVWDVGHQTYVHKILTGRREGMSKLRMRGGIAGFPRRDESEYDAFGTAHSSTSISAALGMAVASQWEGKKRSVVAVIGDGAMSAGMAFEALNNAGAMDTNLLVILNDNDMSISRPVGALNNYLARLMSGQFYATARRAGEKMLGVVPHVLELAKRAEEHVKGMVTPSTLFEEFGFNYIGPIDGHDLDVLVSTLNNIRNLRGPQFLHVVTRKGAGYKAAEDDPILYHGVTRFNPDAGIIPKASVKPSYTQVFGDWLCDMAALDQRLVGITPAMREGSGMVRFSHEYADRYFDVGIAEQHAVTFAAGLACDGLKPVVAIYSTFLQRAYDQLIHDVAIQNLPVVFAIDRAGLVGADGPTHAGSFDLTYLRCIPNITVMAPSDENECRQMLYTAFQMNTPAAVRYPRGSGSGVAQQKEMQMLPLGRGEIRREGAEIALLAFGSMLQPCLEAAEELNATVANMRFVKPLDDDLVASLAANHELLVTVEENTVMGGAGSAVLESLSARGRTVPVLQLGLPDTFLDQGDPSQMLSECGLDREGIVHAIRARFPK</sequence>
<accession>Q2YCH7</accession>
<evidence type="ECO:0000255" key="1">
    <source>
        <dbReference type="HAMAP-Rule" id="MF_00315"/>
    </source>
</evidence>
<name>DXS_NITMU</name>
<organism>
    <name type="scientific">Nitrosospira multiformis (strain ATCC 25196 / NCIMB 11849 / C 71)</name>
    <dbReference type="NCBI Taxonomy" id="323848"/>
    <lineage>
        <taxon>Bacteria</taxon>
        <taxon>Pseudomonadati</taxon>
        <taxon>Pseudomonadota</taxon>
        <taxon>Betaproteobacteria</taxon>
        <taxon>Nitrosomonadales</taxon>
        <taxon>Nitrosomonadaceae</taxon>
        <taxon>Nitrosospira</taxon>
    </lineage>
</organism>
<feature type="chain" id="PRO_0000256444" description="1-deoxy-D-xylulose-5-phosphate synthase">
    <location>
        <begin position="1"/>
        <end position="614"/>
    </location>
</feature>
<feature type="binding site" evidence="1">
    <location>
        <position position="74"/>
    </location>
    <ligand>
        <name>thiamine diphosphate</name>
        <dbReference type="ChEBI" id="CHEBI:58937"/>
    </ligand>
</feature>
<feature type="binding site" evidence="1">
    <location>
        <begin position="115"/>
        <end position="117"/>
    </location>
    <ligand>
        <name>thiamine diphosphate</name>
        <dbReference type="ChEBI" id="CHEBI:58937"/>
    </ligand>
</feature>
<feature type="binding site" evidence="1">
    <location>
        <position position="146"/>
    </location>
    <ligand>
        <name>Mg(2+)</name>
        <dbReference type="ChEBI" id="CHEBI:18420"/>
    </ligand>
</feature>
<feature type="binding site" evidence="1">
    <location>
        <begin position="147"/>
        <end position="148"/>
    </location>
    <ligand>
        <name>thiamine diphosphate</name>
        <dbReference type="ChEBI" id="CHEBI:58937"/>
    </ligand>
</feature>
<feature type="binding site" evidence="1">
    <location>
        <position position="175"/>
    </location>
    <ligand>
        <name>Mg(2+)</name>
        <dbReference type="ChEBI" id="CHEBI:18420"/>
    </ligand>
</feature>
<feature type="binding site" evidence="1">
    <location>
        <position position="175"/>
    </location>
    <ligand>
        <name>thiamine diphosphate</name>
        <dbReference type="ChEBI" id="CHEBI:58937"/>
    </ligand>
</feature>
<feature type="binding site" evidence="1">
    <location>
        <position position="282"/>
    </location>
    <ligand>
        <name>thiamine diphosphate</name>
        <dbReference type="ChEBI" id="CHEBI:58937"/>
    </ligand>
</feature>
<feature type="binding site" evidence="1">
    <location>
        <position position="363"/>
    </location>
    <ligand>
        <name>thiamine diphosphate</name>
        <dbReference type="ChEBI" id="CHEBI:58937"/>
    </ligand>
</feature>
<gene>
    <name evidence="1" type="primary">dxs</name>
    <name type="ordered locus">Nmul_A0236</name>
</gene>
<comment type="function">
    <text evidence="1">Catalyzes the acyloin condensation reaction between C atoms 2 and 3 of pyruvate and glyceraldehyde 3-phosphate to yield 1-deoxy-D-xylulose-5-phosphate (DXP).</text>
</comment>
<comment type="catalytic activity">
    <reaction evidence="1">
        <text>D-glyceraldehyde 3-phosphate + pyruvate + H(+) = 1-deoxy-D-xylulose 5-phosphate + CO2</text>
        <dbReference type="Rhea" id="RHEA:12605"/>
        <dbReference type="ChEBI" id="CHEBI:15361"/>
        <dbReference type="ChEBI" id="CHEBI:15378"/>
        <dbReference type="ChEBI" id="CHEBI:16526"/>
        <dbReference type="ChEBI" id="CHEBI:57792"/>
        <dbReference type="ChEBI" id="CHEBI:59776"/>
        <dbReference type="EC" id="2.2.1.7"/>
    </reaction>
</comment>
<comment type="cofactor">
    <cofactor evidence="1">
        <name>Mg(2+)</name>
        <dbReference type="ChEBI" id="CHEBI:18420"/>
    </cofactor>
    <text evidence="1">Binds 1 Mg(2+) ion per subunit.</text>
</comment>
<comment type="cofactor">
    <cofactor evidence="1">
        <name>thiamine diphosphate</name>
        <dbReference type="ChEBI" id="CHEBI:58937"/>
    </cofactor>
    <text evidence="1">Binds 1 thiamine pyrophosphate per subunit.</text>
</comment>
<comment type="pathway">
    <text evidence="1">Metabolic intermediate biosynthesis; 1-deoxy-D-xylulose 5-phosphate biosynthesis; 1-deoxy-D-xylulose 5-phosphate from D-glyceraldehyde 3-phosphate and pyruvate: step 1/1.</text>
</comment>
<comment type="subunit">
    <text evidence="1">Homodimer.</text>
</comment>
<comment type="similarity">
    <text evidence="1">Belongs to the transketolase family. DXPS subfamily.</text>
</comment>
<reference key="1">
    <citation type="submission" date="2005-08" db="EMBL/GenBank/DDBJ databases">
        <title>Complete sequence of chromosome 1 of Nitrosospira multiformis ATCC 25196.</title>
        <authorList>
            <person name="Copeland A."/>
            <person name="Lucas S."/>
            <person name="Lapidus A."/>
            <person name="Barry K."/>
            <person name="Detter J.C."/>
            <person name="Glavina T."/>
            <person name="Hammon N."/>
            <person name="Israni S."/>
            <person name="Pitluck S."/>
            <person name="Chain P."/>
            <person name="Malfatti S."/>
            <person name="Shin M."/>
            <person name="Vergez L."/>
            <person name="Schmutz J."/>
            <person name="Larimer F."/>
            <person name="Land M."/>
            <person name="Hauser L."/>
            <person name="Kyrpides N."/>
            <person name="Lykidis A."/>
            <person name="Richardson P."/>
        </authorList>
    </citation>
    <scope>NUCLEOTIDE SEQUENCE [LARGE SCALE GENOMIC DNA]</scope>
    <source>
        <strain>ATCC 25196 / NCIMB 11849 / C 71</strain>
    </source>
</reference>